<gene>
    <name evidence="10" type="primary">acs-7</name>
    <name evidence="10" type="ORF">C01G6.7</name>
</gene>
<sequence>MIFHGEQLENHDKPVHEVLLERFKVHQEKDPDNVAFVTAENEDDSLGFQQLGKKVLQISEWFVENGYKKGDVFLLASYNNWRCFAAALGAWRAGLIVSAAASQFTSFEMNYQIEDSQSQVILVDKHTLPVVQEACKNLKFVKQIISISANPPSPVIKFDVLTSRLVRNLKMPLIDPKNDIVFLPYSSGTTGKPKGVMISHLNFSMMLESSLRFFDANAKAIGLPPDFVLPYDLHFLPMYHAMGMFRTLLTSYRGTTQIMFTKFDMELMLKNIEKYSIMVLSLVPAIAVRMLNSPLLQKYDVSSLVSVTVGSAPFPESASKKLKQLLPNVNIVQGYGMTELTFATHLQSPGSPDGSVGRLVPGTSMKVKKEDGTLCGPHEIGELWIKGPQMMKGYWKKEQQTNELLDEHGFMRTGDIVYFDKNGETFICDRIKELIKVNAKQVAPAELESVILEHDDVADVCVFGVDDASSGERPVACVVSKRGRDMETSKAIMKHINQKLARYKHIKEIEFVSEIMRTGTGKLLRRAMKKAFLDAKKAKL</sequence>
<organism evidence="9">
    <name type="scientific">Caenorhabditis elegans</name>
    <dbReference type="NCBI Taxonomy" id="6239"/>
    <lineage>
        <taxon>Eukaryota</taxon>
        <taxon>Metazoa</taxon>
        <taxon>Ecdysozoa</taxon>
        <taxon>Nematoda</taxon>
        <taxon>Chromadorea</taxon>
        <taxon>Rhabditida</taxon>
        <taxon>Rhabditina</taxon>
        <taxon>Rhabditomorpha</taxon>
        <taxon>Rhabditoidea</taxon>
        <taxon>Rhabditidae</taxon>
        <taxon>Peloderinae</taxon>
        <taxon>Caenorhabditis</taxon>
    </lineage>
</organism>
<dbReference type="EC" id="6.2.1.-" evidence="4 8"/>
<dbReference type="EMBL" id="BX284602">
    <property type="protein sequence ID" value="CAA84640.1"/>
    <property type="molecule type" value="Genomic_DNA"/>
</dbReference>
<dbReference type="PIR" id="T18841">
    <property type="entry name" value="T18841"/>
</dbReference>
<dbReference type="RefSeq" id="NP_495979.1">
    <property type="nucleotide sequence ID" value="NM_063578.7"/>
</dbReference>
<dbReference type="SMR" id="Q17577"/>
<dbReference type="FunCoup" id="Q17577">
    <property type="interactions" value="47"/>
</dbReference>
<dbReference type="STRING" id="6239.C01G6.7.1"/>
<dbReference type="PaxDb" id="6239-C01G6.7"/>
<dbReference type="PeptideAtlas" id="Q17577"/>
<dbReference type="EnsemblMetazoa" id="C01G6.7.1">
    <property type="protein sequence ID" value="C01G6.7.1"/>
    <property type="gene ID" value="WBGene00007228"/>
</dbReference>
<dbReference type="GeneID" id="174472"/>
<dbReference type="KEGG" id="cel:CELE_C01G6.7"/>
<dbReference type="UCSC" id="C01G6.7">
    <property type="organism name" value="c. elegans"/>
</dbReference>
<dbReference type="AGR" id="WB:WBGene00007228"/>
<dbReference type="CTD" id="174472"/>
<dbReference type="WormBase" id="C01G6.7">
    <property type="protein sequence ID" value="CE00869"/>
    <property type="gene ID" value="WBGene00007228"/>
    <property type="gene designation" value="acs-7"/>
</dbReference>
<dbReference type="eggNOG" id="KOG1176">
    <property type="taxonomic scope" value="Eukaryota"/>
</dbReference>
<dbReference type="HOGENOM" id="CLU_000022_59_2_1"/>
<dbReference type="InParanoid" id="Q17577"/>
<dbReference type="OMA" id="GLMQDWP"/>
<dbReference type="OrthoDB" id="10253869at2759"/>
<dbReference type="PhylomeDB" id="Q17577"/>
<dbReference type="SABIO-RK" id="Q17577"/>
<dbReference type="PRO" id="PR:Q17577"/>
<dbReference type="Proteomes" id="UP000001940">
    <property type="component" value="Chromosome II"/>
</dbReference>
<dbReference type="Bgee" id="WBGene00007228">
    <property type="expression patterns" value="Expressed in larva and 3 other cell types or tissues"/>
</dbReference>
<dbReference type="GO" id="GO:0005777">
    <property type="term" value="C:peroxisome"/>
    <property type="evidence" value="ECO:0000314"/>
    <property type="project" value="UniProtKB"/>
</dbReference>
<dbReference type="GO" id="GO:0005524">
    <property type="term" value="F:ATP binding"/>
    <property type="evidence" value="ECO:0007669"/>
    <property type="project" value="UniProtKB-KW"/>
</dbReference>
<dbReference type="GO" id="GO:0016405">
    <property type="term" value="F:CoA-ligase activity"/>
    <property type="evidence" value="ECO:0000318"/>
    <property type="project" value="GO_Central"/>
</dbReference>
<dbReference type="GO" id="GO:0016874">
    <property type="term" value="F:ligase activity"/>
    <property type="evidence" value="ECO:0000314"/>
    <property type="project" value="UniProtKB"/>
</dbReference>
<dbReference type="GO" id="GO:0031956">
    <property type="term" value="F:medium-chain fatty acid-CoA ligase activity"/>
    <property type="evidence" value="ECO:0000314"/>
    <property type="project" value="UniProtKB"/>
</dbReference>
<dbReference type="GO" id="GO:1904070">
    <property type="term" value="P:ascaroside biosynthetic process"/>
    <property type="evidence" value="ECO:0000315"/>
    <property type="project" value="UniProtKB"/>
</dbReference>
<dbReference type="GO" id="GO:0006633">
    <property type="term" value="P:fatty acid biosynthetic process"/>
    <property type="evidence" value="ECO:0007669"/>
    <property type="project" value="UniProtKB-KW"/>
</dbReference>
<dbReference type="CDD" id="cd05911">
    <property type="entry name" value="Firefly_Luc_like"/>
    <property type="match status" value="1"/>
</dbReference>
<dbReference type="FunFam" id="3.30.300.30:FF:000007">
    <property type="entry name" value="4-coumarate--CoA ligase 2"/>
    <property type="match status" value="1"/>
</dbReference>
<dbReference type="Gene3D" id="3.30.300.30">
    <property type="match status" value="1"/>
</dbReference>
<dbReference type="Gene3D" id="3.40.50.12780">
    <property type="entry name" value="N-terminal domain of ligase-like"/>
    <property type="match status" value="1"/>
</dbReference>
<dbReference type="InterPro" id="IPR025110">
    <property type="entry name" value="AMP-bd_C"/>
</dbReference>
<dbReference type="InterPro" id="IPR045851">
    <property type="entry name" value="AMP-bd_C_sf"/>
</dbReference>
<dbReference type="InterPro" id="IPR020845">
    <property type="entry name" value="AMP-binding_CS"/>
</dbReference>
<dbReference type="InterPro" id="IPR000873">
    <property type="entry name" value="AMP-dep_synth/lig_dom"/>
</dbReference>
<dbReference type="InterPro" id="IPR042099">
    <property type="entry name" value="ANL_N_sf"/>
</dbReference>
<dbReference type="PANTHER" id="PTHR24096:SF257">
    <property type="entry name" value="ACYL-COA SYNTHETASE 7"/>
    <property type="match status" value="1"/>
</dbReference>
<dbReference type="PANTHER" id="PTHR24096">
    <property type="entry name" value="LONG-CHAIN-FATTY-ACID--COA LIGASE"/>
    <property type="match status" value="1"/>
</dbReference>
<dbReference type="Pfam" id="PF00501">
    <property type="entry name" value="AMP-binding"/>
    <property type="match status" value="1"/>
</dbReference>
<dbReference type="Pfam" id="PF13193">
    <property type="entry name" value="AMP-binding_C"/>
    <property type="match status" value="1"/>
</dbReference>
<dbReference type="SUPFAM" id="SSF56801">
    <property type="entry name" value="Acetyl-CoA synthetase-like"/>
    <property type="match status" value="1"/>
</dbReference>
<dbReference type="PROSITE" id="PS00455">
    <property type="entry name" value="AMP_BINDING"/>
    <property type="match status" value="1"/>
</dbReference>
<keyword id="KW-0067">ATP-binding</keyword>
<keyword id="KW-0275">Fatty acid biosynthesis</keyword>
<keyword id="KW-0276">Fatty acid metabolism</keyword>
<keyword id="KW-0436">Ligase</keyword>
<keyword id="KW-0444">Lipid biosynthesis</keyword>
<keyword id="KW-0443">Lipid metabolism</keyword>
<keyword id="KW-0547">Nucleotide-binding</keyword>
<keyword id="KW-0576">Peroxisome</keyword>
<keyword id="KW-1185">Reference proteome</keyword>
<feature type="chain" id="PRO_0000452470" description="Acyl-CoA synthetase 7">
    <location>
        <begin position="1"/>
        <end position="540"/>
    </location>
</feature>
<feature type="short sequence motif" description="Microbody targeting signal" evidence="2">
    <location>
        <begin position="538"/>
        <end position="540"/>
    </location>
</feature>
<feature type="binding site" evidence="1">
    <location>
        <begin position="186"/>
        <end position="194"/>
    </location>
    <ligand>
        <name>ATP</name>
        <dbReference type="ChEBI" id="CHEBI:30616"/>
    </ligand>
</feature>
<feature type="binding site" evidence="1">
    <location>
        <position position="415"/>
    </location>
    <ligand>
        <name>ATP</name>
        <dbReference type="ChEBI" id="CHEBI:30616"/>
    </ligand>
</feature>
<feature type="binding site" evidence="1">
    <location>
        <position position="430"/>
    </location>
    <ligand>
        <name>ATP</name>
        <dbReference type="ChEBI" id="CHEBI:30616"/>
    </ligand>
</feature>
<feature type="binding site" evidence="1">
    <location>
        <position position="522"/>
    </location>
    <ligand>
        <name>ATP</name>
        <dbReference type="ChEBI" id="CHEBI:30616"/>
    </ligand>
</feature>
<feature type="mutagenesis site" description="Loss of catalytic activity; when associated with A-339." evidence="4">
    <original>SS</original>
    <variation>AA</variation>
    <location>
        <begin position="186"/>
        <end position="187"/>
    </location>
</feature>
<feature type="mutagenesis site" description="Severe loss of catalytic activity. Loss of catalytic activity; when associated with 186-A-A-187." evidence="4">
    <original>E</original>
    <variation>A</variation>
    <location>
        <position position="339"/>
    </location>
</feature>
<proteinExistence type="evidence at protein level"/>
<protein>
    <recommendedName>
        <fullName evidence="6">Acyl-CoA synthetase 7</fullName>
        <ecNumber evidence="4 8">6.2.1.-</ecNumber>
    </recommendedName>
</protein>
<comment type="function">
    <text evidence="3 4 5">Plays a role in ascaroside pheromones biosynthesis, which regulates development and behavior (PubMed:28371259, PubMed:29863473, PubMed:32702987). Specifically, activates the side chain of medium-chain indol-3-carbonyl (IC)-ascarosides for shortening through beta-oxidation (PubMed:29863473, PubMed:32702987). Converts IC-asc-C7 and IC-asc-C9 into IC-asc-C7-CoA and IC-asc-C9-CoA, respectively (PubMed:29863473, PubMed:32702987). May play a role in fatty-acid metabolism by activating and converting nonanoate (C9) into nonanoyl-CoA (C9-CoA) (PubMed:29863473).</text>
</comment>
<comment type="catalytic activity">
    <reaction evidence="4">
        <text>nonanoate + ATP + CoA = nonanoyl-CoA + AMP + diphosphate</text>
        <dbReference type="Rhea" id="RHEA:54952"/>
        <dbReference type="ChEBI" id="CHEBI:30616"/>
        <dbReference type="ChEBI" id="CHEBI:32361"/>
        <dbReference type="ChEBI" id="CHEBI:33019"/>
        <dbReference type="ChEBI" id="CHEBI:57287"/>
        <dbReference type="ChEBI" id="CHEBI:76291"/>
        <dbReference type="ChEBI" id="CHEBI:456215"/>
    </reaction>
</comment>
<comment type="catalytic activity">
    <reaction evidence="4">
        <text>IC-asc-C7 + ATP + CoA = IC-asc-C7-CoA + AMP + diphosphate</text>
        <dbReference type="Rhea" id="RHEA:66252"/>
        <dbReference type="ChEBI" id="CHEBI:30616"/>
        <dbReference type="ChEBI" id="CHEBI:33019"/>
        <dbReference type="ChEBI" id="CHEBI:57287"/>
        <dbReference type="ChEBI" id="CHEBI:140800"/>
        <dbReference type="ChEBI" id="CHEBI:166976"/>
        <dbReference type="ChEBI" id="CHEBI:456215"/>
    </reaction>
</comment>
<comment type="catalytic activity">
    <reaction evidence="4 8">
        <text>IC-asc-C9 + ATP + CoA = IC-asc-C9-CoA + AMP + diphosphate</text>
        <dbReference type="Rhea" id="RHEA:66240"/>
        <dbReference type="ChEBI" id="CHEBI:30616"/>
        <dbReference type="ChEBI" id="CHEBI:33019"/>
        <dbReference type="ChEBI" id="CHEBI:57287"/>
        <dbReference type="ChEBI" id="CHEBI:140801"/>
        <dbReference type="ChEBI" id="CHEBI:166973"/>
        <dbReference type="ChEBI" id="CHEBI:456215"/>
    </reaction>
</comment>
<comment type="biophysicochemical properties">
    <kinetics>
        <KM evidence="4">14.5 uM for IC-asc-C9 (at pH 7.4 and 22 degrees Celsius)</KM>
        <text evidence="4">kcat is 0.53 sec(-1) with IC-asc-C9 (at pH 7.4 and 22 degrees Celsius).</text>
    </kinetics>
</comment>
<comment type="subcellular location">
    <subcellularLocation>
        <location evidence="4">Peroxisome</location>
    </subcellularLocation>
</comment>
<comment type="tissue specificity">
    <text evidence="3 4">Expressed in intestine.</text>
</comment>
<comment type="similarity">
    <text evidence="7">Belongs to the ATP-dependent AMP-binding enzyme family.</text>
</comment>
<accession>Q17577</accession>
<reference evidence="9" key="1">
    <citation type="journal article" date="1998" name="Science">
        <title>Genome sequence of the nematode C. elegans: a platform for investigating biology.</title>
        <authorList>
            <consortium name="The C. elegans sequencing consortium"/>
        </authorList>
    </citation>
    <scope>NUCLEOTIDE SEQUENCE [LARGE SCALE GENOMIC DNA]</scope>
    <source>
        <strain evidence="9">Bristol N2</strain>
    </source>
</reference>
<reference evidence="7" key="2">
    <citation type="journal article" date="2017" name="Angew. Chem. Int. Ed.">
        <title>Biosynthesis of Modular Ascarosides in C. elegans.</title>
        <authorList>
            <person name="Panda O."/>
            <person name="Akagi A.E."/>
            <person name="Artyukhin A.B."/>
            <person name="Judkins J.C."/>
            <person name="Le H.H."/>
            <person name="Mahanti P."/>
            <person name="Cohen S.M."/>
            <person name="Sternberg P.W."/>
            <person name="Schroeder F.C."/>
        </authorList>
    </citation>
    <scope>FUNCTION</scope>
    <scope>TISSUE SPECIFICITY</scope>
</reference>
<reference evidence="7" key="3">
    <citation type="journal article" date="2018" name="Elife">
        <title>Biosynthetic tailoring of existing ascaroside pheromones alters their biological function in C. elegans.</title>
        <authorList>
            <person name="Zhou Y."/>
            <person name="Wang Y."/>
            <person name="Zhang X."/>
            <person name="Bhar S."/>
            <person name="Jones Lipinski R.A."/>
            <person name="Han J."/>
            <person name="Feng L."/>
            <person name="Butcher R.A."/>
        </authorList>
    </citation>
    <scope>FUNCTION</scope>
    <scope>CATALYTIC ACTIVITY</scope>
    <scope>BIOPHYSICOCHEMICAL PROPERTIES</scope>
    <scope>MUTAGENESIS OF 186-SER-SER-187 AND GLU-339</scope>
</reference>
<reference evidence="7" key="4">
    <citation type="journal article" date="2020" name="J. Am. Chem. Soc.">
        <title>A Large Family of Enzymes Responsible for the Modular Architecture of Nematode Pheromones.</title>
        <authorList>
            <person name="Faghih N."/>
            <person name="Bhar S."/>
            <person name="Zhou Y."/>
            <person name="Dar A.R."/>
            <person name="Mai K."/>
            <person name="Bailey L.S."/>
            <person name="Basso K.B."/>
            <person name="Butcher R.A."/>
        </authorList>
    </citation>
    <scope>FUNCTION</scope>
    <scope>CATALYTIC ACTIVITY</scope>
</reference>
<name>ACS7_CAEEL</name>
<evidence type="ECO:0000250" key="1">
    <source>
        <dbReference type="UniProtKB" id="Q08AH3"/>
    </source>
</evidence>
<evidence type="ECO:0000255" key="2"/>
<evidence type="ECO:0000269" key="3">
    <source>
    </source>
</evidence>
<evidence type="ECO:0000269" key="4">
    <source>
    </source>
</evidence>
<evidence type="ECO:0000269" key="5">
    <source>
    </source>
</evidence>
<evidence type="ECO:0000303" key="6">
    <source>
    </source>
</evidence>
<evidence type="ECO:0000305" key="7"/>
<evidence type="ECO:0000305" key="8">
    <source>
    </source>
</evidence>
<evidence type="ECO:0000312" key="9">
    <source>
        <dbReference type="Proteomes" id="UP000001940"/>
    </source>
</evidence>
<evidence type="ECO:0000312" key="10">
    <source>
        <dbReference type="WormBase" id="C01G6.7"/>
    </source>
</evidence>